<gene>
    <name evidence="1" type="primary">ligA</name>
    <name type="ordered locus">Ddes_1425</name>
</gene>
<organism>
    <name type="scientific">Desulfovibrio desulfuricans (strain ATCC 27774 / DSM 6949 / MB)</name>
    <dbReference type="NCBI Taxonomy" id="525146"/>
    <lineage>
        <taxon>Bacteria</taxon>
        <taxon>Pseudomonadati</taxon>
        <taxon>Thermodesulfobacteriota</taxon>
        <taxon>Desulfovibrionia</taxon>
        <taxon>Desulfovibrionales</taxon>
        <taxon>Desulfovibrionaceae</taxon>
        <taxon>Desulfovibrio</taxon>
    </lineage>
</organism>
<feature type="chain" id="PRO_0000380363" description="DNA ligase">
    <location>
        <begin position="1"/>
        <end position="712"/>
    </location>
</feature>
<feature type="domain" description="BRCT" evidence="1">
    <location>
        <begin position="629"/>
        <end position="712"/>
    </location>
</feature>
<feature type="region of interest" description="Disordered" evidence="2">
    <location>
        <begin position="1"/>
        <end position="22"/>
    </location>
</feature>
<feature type="region of interest" description="Disordered" evidence="2">
    <location>
        <begin position="612"/>
        <end position="631"/>
    </location>
</feature>
<feature type="compositionally biased region" description="Gly residues" evidence="2">
    <location>
        <begin position="614"/>
        <end position="630"/>
    </location>
</feature>
<feature type="active site" description="N6-AMP-lysine intermediate" evidence="1">
    <location>
        <position position="140"/>
    </location>
</feature>
<feature type="binding site" evidence="1">
    <location>
        <begin position="53"/>
        <end position="57"/>
    </location>
    <ligand>
        <name>NAD(+)</name>
        <dbReference type="ChEBI" id="CHEBI:57540"/>
    </ligand>
</feature>
<feature type="binding site" evidence="1">
    <location>
        <position position="138"/>
    </location>
    <ligand>
        <name>NAD(+)</name>
        <dbReference type="ChEBI" id="CHEBI:57540"/>
    </ligand>
</feature>
<feature type="binding site" evidence="1">
    <location>
        <position position="161"/>
    </location>
    <ligand>
        <name>NAD(+)</name>
        <dbReference type="ChEBI" id="CHEBI:57540"/>
    </ligand>
</feature>
<feature type="binding site" evidence="1">
    <location>
        <position position="199"/>
    </location>
    <ligand>
        <name>NAD(+)</name>
        <dbReference type="ChEBI" id="CHEBI:57540"/>
    </ligand>
</feature>
<feature type="binding site" evidence="1">
    <location>
        <position position="318"/>
    </location>
    <ligand>
        <name>NAD(+)</name>
        <dbReference type="ChEBI" id="CHEBI:57540"/>
    </ligand>
</feature>
<feature type="binding site" evidence="1">
    <location>
        <position position="342"/>
    </location>
    <ligand>
        <name>NAD(+)</name>
        <dbReference type="ChEBI" id="CHEBI:57540"/>
    </ligand>
</feature>
<feature type="binding site" evidence="1">
    <location>
        <position position="436"/>
    </location>
    <ligand>
        <name>Zn(2+)</name>
        <dbReference type="ChEBI" id="CHEBI:29105"/>
    </ligand>
</feature>
<feature type="binding site" evidence="1">
    <location>
        <position position="439"/>
    </location>
    <ligand>
        <name>Zn(2+)</name>
        <dbReference type="ChEBI" id="CHEBI:29105"/>
    </ligand>
</feature>
<feature type="binding site" evidence="1">
    <location>
        <position position="454"/>
    </location>
    <ligand>
        <name>Zn(2+)</name>
        <dbReference type="ChEBI" id="CHEBI:29105"/>
    </ligand>
</feature>
<feature type="binding site" evidence="1">
    <location>
        <position position="459"/>
    </location>
    <ligand>
        <name>Zn(2+)</name>
        <dbReference type="ChEBI" id="CHEBI:29105"/>
    </ligand>
</feature>
<protein>
    <recommendedName>
        <fullName evidence="1">DNA ligase</fullName>
        <ecNumber evidence="1">6.5.1.2</ecNumber>
    </recommendedName>
    <alternativeName>
        <fullName evidence="1">Polydeoxyribonucleotide synthase [NAD(+)]</fullName>
    </alternativeName>
</protein>
<proteinExistence type="inferred from homology"/>
<evidence type="ECO:0000255" key="1">
    <source>
        <dbReference type="HAMAP-Rule" id="MF_01588"/>
    </source>
</evidence>
<evidence type="ECO:0000256" key="2">
    <source>
        <dbReference type="SAM" id="MobiDB-lite"/>
    </source>
</evidence>
<name>DNLJ_DESDA</name>
<dbReference type="EC" id="6.5.1.2" evidence="1"/>
<dbReference type="EMBL" id="CP001358">
    <property type="protein sequence ID" value="ACL49327.1"/>
    <property type="molecule type" value="Genomic_DNA"/>
</dbReference>
<dbReference type="SMR" id="B8J0Q0"/>
<dbReference type="STRING" id="525146.Ddes_1425"/>
<dbReference type="KEGG" id="dds:Ddes_1425"/>
<dbReference type="eggNOG" id="COG0272">
    <property type="taxonomic scope" value="Bacteria"/>
</dbReference>
<dbReference type="HOGENOM" id="CLU_007764_2_1_7"/>
<dbReference type="GO" id="GO:0003677">
    <property type="term" value="F:DNA binding"/>
    <property type="evidence" value="ECO:0007669"/>
    <property type="project" value="InterPro"/>
</dbReference>
<dbReference type="GO" id="GO:0003911">
    <property type="term" value="F:DNA ligase (NAD+) activity"/>
    <property type="evidence" value="ECO:0007669"/>
    <property type="project" value="UniProtKB-UniRule"/>
</dbReference>
<dbReference type="GO" id="GO:0046872">
    <property type="term" value="F:metal ion binding"/>
    <property type="evidence" value="ECO:0007669"/>
    <property type="project" value="UniProtKB-KW"/>
</dbReference>
<dbReference type="GO" id="GO:0006281">
    <property type="term" value="P:DNA repair"/>
    <property type="evidence" value="ECO:0007669"/>
    <property type="project" value="UniProtKB-KW"/>
</dbReference>
<dbReference type="GO" id="GO:0006260">
    <property type="term" value="P:DNA replication"/>
    <property type="evidence" value="ECO:0007669"/>
    <property type="project" value="UniProtKB-KW"/>
</dbReference>
<dbReference type="CDD" id="cd17748">
    <property type="entry name" value="BRCT_DNA_ligase_like"/>
    <property type="match status" value="1"/>
</dbReference>
<dbReference type="CDD" id="cd00114">
    <property type="entry name" value="LIGANc"/>
    <property type="match status" value="1"/>
</dbReference>
<dbReference type="FunFam" id="1.10.150.20:FF:000006">
    <property type="entry name" value="DNA ligase"/>
    <property type="match status" value="1"/>
</dbReference>
<dbReference type="FunFam" id="2.40.50.140:FF:000012">
    <property type="entry name" value="DNA ligase"/>
    <property type="match status" value="1"/>
</dbReference>
<dbReference type="Gene3D" id="6.20.10.30">
    <property type="match status" value="1"/>
</dbReference>
<dbReference type="Gene3D" id="1.10.150.20">
    <property type="entry name" value="5' to 3' exonuclease, C-terminal subdomain"/>
    <property type="match status" value="2"/>
</dbReference>
<dbReference type="Gene3D" id="3.40.50.10190">
    <property type="entry name" value="BRCT domain"/>
    <property type="match status" value="1"/>
</dbReference>
<dbReference type="Gene3D" id="3.30.470.30">
    <property type="entry name" value="DNA ligase/mRNA capping enzyme"/>
    <property type="match status" value="1"/>
</dbReference>
<dbReference type="Gene3D" id="1.10.287.610">
    <property type="entry name" value="Helix hairpin bin"/>
    <property type="match status" value="1"/>
</dbReference>
<dbReference type="Gene3D" id="2.40.50.140">
    <property type="entry name" value="Nucleic acid-binding proteins"/>
    <property type="match status" value="1"/>
</dbReference>
<dbReference type="HAMAP" id="MF_01588">
    <property type="entry name" value="DNA_ligase_A"/>
    <property type="match status" value="1"/>
</dbReference>
<dbReference type="InterPro" id="IPR001357">
    <property type="entry name" value="BRCT_dom"/>
</dbReference>
<dbReference type="InterPro" id="IPR036420">
    <property type="entry name" value="BRCT_dom_sf"/>
</dbReference>
<dbReference type="InterPro" id="IPR041663">
    <property type="entry name" value="DisA/LigA_HHH"/>
</dbReference>
<dbReference type="InterPro" id="IPR001679">
    <property type="entry name" value="DNA_ligase"/>
</dbReference>
<dbReference type="InterPro" id="IPR033136">
    <property type="entry name" value="DNA_ligase_CS"/>
</dbReference>
<dbReference type="InterPro" id="IPR013839">
    <property type="entry name" value="DNAligase_adenylation"/>
</dbReference>
<dbReference type="InterPro" id="IPR013840">
    <property type="entry name" value="DNAligase_N"/>
</dbReference>
<dbReference type="InterPro" id="IPR003583">
    <property type="entry name" value="Hlx-hairpin-Hlx_DNA-bd_motif"/>
</dbReference>
<dbReference type="InterPro" id="IPR012340">
    <property type="entry name" value="NA-bd_OB-fold"/>
</dbReference>
<dbReference type="InterPro" id="IPR004150">
    <property type="entry name" value="NAD_DNA_ligase_OB"/>
</dbReference>
<dbReference type="InterPro" id="IPR010994">
    <property type="entry name" value="RuvA_2-like"/>
</dbReference>
<dbReference type="InterPro" id="IPR004149">
    <property type="entry name" value="Znf_DNAligase_C4"/>
</dbReference>
<dbReference type="NCBIfam" id="TIGR00575">
    <property type="entry name" value="dnlj"/>
    <property type="match status" value="1"/>
</dbReference>
<dbReference type="NCBIfam" id="NF005932">
    <property type="entry name" value="PRK07956.1"/>
    <property type="match status" value="1"/>
</dbReference>
<dbReference type="PANTHER" id="PTHR23389">
    <property type="entry name" value="CHROMOSOME TRANSMISSION FIDELITY FACTOR 18"/>
    <property type="match status" value="1"/>
</dbReference>
<dbReference type="PANTHER" id="PTHR23389:SF9">
    <property type="entry name" value="DNA LIGASE"/>
    <property type="match status" value="1"/>
</dbReference>
<dbReference type="Pfam" id="PF00533">
    <property type="entry name" value="BRCT"/>
    <property type="match status" value="1"/>
</dbReference>
<dbReference type="Pfam" id="PF01653">
    <property type="entry name" value="DNA_ligase_aden"/>
    <property type="match status" value="1"/>
</dbReference>
<dbReference type="Pfam" id="PF03120">
    <property type="entry name" value="DNA_ligase_OB"/>
    <property type="match status" value="1"/>
</dbReference>
<dbReference type="Pfam" id="PF03119">
    <property type="entry name" value="DNA_ligase_ZBD"/>
    <property type="match status" value="1"/>
</dbReference>
<dbReference type="Pfam" id="PF12826">
    <property type="entry name" value="HHH_2"/>
    <property type="match status" value="1"/>
</dbReference>
<dbReference type="Pfam" id="PF22745">
    <property type="entry name" value="Nlig-Ia"/>
    <property type="match status" value="1"/>
</dbReference>
<dbReference type="PIRSF" id="PIRSF001604">
    <property type="entry name" value="LigA"/>
    <property type="match status" value="1"/>
</dbReference>
<dbReference type="SMART" id="SM00292">
    <property type="entry name" value="BRCT"/>
    <property type="match status" value="1"/>
</dbReference>
<dbReference type="SMART" id="SM00278">
    <property type="entry name" value="HhH1"/>
    <property type="match status" value="3"/>
</dbReference>
<dbReference type="SMART" id="SM00532">
    <property type="entry name" value="LIGANc"/>
    <property type="match status" value="1"/>
</dbReference>
<dbReference type="SUPFAM" id="SSF52113">
    <property type="entry name" value="BRCT domain"/>
    <property type="match status" value="1"/>
</dbReference>
<dbReference type="SUPFAM" id="SSF56091">
    <property type="entry name" value="DNA ligase/mRNA capping enzyme, catalytic domain"/>
    <property type="match status" value="1"/>
</dbReference>
<dbReference type="SUPFAM" id="SSF50249">
    <property type="entry name" value="Nucleic acid-binding proteins"/>
    <property type="match status" value="1"/>
</dbReference>
<dbReference type="SUPFAM" id="SSF47781">
    <property type="entry name" value="RuvA domain 2-like"/>
    <property type="match status" value="1"/>
</dbReference>
<dbReference type="PROSITE" id="PS50172">
    <property type="entry name" value="BRCT"/>
    <property type="match status" value="1"/>
</dbReference>
<dbReference type="PROSITE" id="PS01056">
    <property type="entry name" value="DNA_LIGASE_N2"/>
    <property type="match status" value="1"/>
</dbReference>
<comment type="function">
    <text evidence="1">DNA ligase that catalyzes the formation of phosphodiester linkages between 5'-phosphoryl and 3'-hydroxyl groups in double-stranded DNA using NAD as a coenzyme and as the energy source for the reaction. It is essential for DNA replication and repair of damaged DNA.</text>
</comment>
<comment type="catalytic activity">
    <reaction evidence="1">
        <text>NAD(+) + (deoxyribonucleotide)n-3'-hydroxyl + 5'-phospho-(deoxyribonucleotide)m = (deoxyribonucleotide)n+m + AMP + beta-nicotinamide D-nucleotide.</text>
        <dbReference type="EC" id="6.5.1.2"/>
    </reaction>
</comment>
<comment type="cofactor">
    <cofactor evidence="1">
        <name>Mg(2+)</name>
        <dbReference type="ChEBI" id="CHEBI:18420"/>
    </cofactor>
    <cofactor evidence="1">
        <name>Mn(2+)</name>
        <dbReference type="ChEBI" id="CHEBI:29035"/>
    </cofactor>
</comment>
<comment type="similarity">
    <text evidence="1">Belongs to the NAD-dependent DNA ligase family. LigA subfamily.</text>
</comment>
<accession>B8J0Q0</accession>
<reference key="1">
    <citation type="submission" date="2009-01" db="EMBL/GenBank/DDBJ databases">
        <title>Complete sequence of Desulfovibrio desulfuricans subsp. desulfuricans str. ATCC 27774.</title>
        <authorList>
            <consortium name="US DOE Joint Genome Institute"/>
            <person name="Lucas S."/>
            <person name="Copeland A."/>
            <person name="Lapidus A."/>
            <person name="Glavina del Rio T."/>
            <person name="Tice H."/>
            <person name="Bruce D."/>
            <person name="Goodwin L."/>
            <person name="Pitluck S."/>
            <person name="Sims D."/>
            <person name="Lu M."/>
            <person name="Kiss H."/>
            <person name="Meineke L."/>
            <person name="Brettin T."/>
            <person name="Detter J.C."/>
            <person name="Han C."/>
            <person name="Larimer F."/>
            <person name="Land M."/>
            <person name="Hauser L."/>
            <person name="Kyrpides N."/>
            <person name="Ovchinnikova G."/>
            <person name="Hazen T.C."/>
        </authorList>
    </citation>
    <scope>NUCLEOTIDE SEQUENCE [LARGE SCALE GENOMIC DNA]</scope>
    <source>
        <strain>ATCC 27774 / DSM 6949 / MB</strain>
    </source>
</reference>
<sequence length="712" mass="77624">MVQKNEHQGGQSQHSLFAAGPTGEERRRVQWLTAELERHNHLYHTLDRPEISDDQFDALFRELQDLETRWPELRSLHSPTLRVGGGLLEGLAKKAHSLQMYGLDNVFSAGQWQEFAERMARAWGGDVNGPLPESFWCDPKLDGLALEIIYADGVLQEALTRGDGEVGEVVTDAVRTIRTVPLRLAGPGPFPARLEVRGEVVMYKNDFAVLNEKQEALGLKTFANPRNAAAGTLRQLDTAIIGSRPLRFLAYSLGQALWTPAPVCLLQSEVMSRLREYGFLTPPDGRLCSSVAEVEEYAQWVREHRAAFPMEIDGAVAKLDNLEAQQALGFTARAPRFAVAFKFPAELAQTLLKDIEIQVGRTGVLTPVAMLEPVSVGGVMVSRATLHNEDEIRNRDVRVGDTVMVRRAGDVIPEVVGPVLEKRPENAREYVFPHTCPACGQPAYREEGEAAWRCENMACSAIRLRAITHFVSKAGLDIAGVGQKWIEQLVTSGRVQSPADLFTLTVQELLGFERMGEVLAHKFVDALARAVHSATLPRLISALGIRHVGEQTARTLALHFETLDELENAGAETLLSLPDVGPEVASSIHNFFNSPANREQLERFRALGLWPRGGRSGGGSSGSTGEGGLASGPLAGKNILFTGTLSMPRSEAEKLAETAGATPLGGVSKKLDYLVAGEKAGSKLEKAQALGVTVLTEEEFMTMLREAKAASE</sequence>
<keyword id="KW-0227">DNA damage</keyword>
<keyword id="KW-0234">DNA repair</keyword>
<keyword id="KW-0235">DNA replication</keyword>
<keyword id="KW-0436">Ligase</keyword>
<keyword id="KW-0460">Magnesium</keyword>
<keyword id="KW-0464">Manganese</keyword>
<keyword id="KW-0479">Metal-binding</keyword>
<keyword id="KW-0520">NAD</keyword>
<keyword id="KW-0862">Zinc</keyword>